<name>PIC_ECOL6</name>
<organism>
    <name type="scientific">Escherichia coli O6:H1 (strain CFT073 / ATCC 700928 / UPEC)</name>
    <dbReference type="NCBI Taxonomy" id="199310"/>
    <lineage>
        <taxon>Bacteria</taxon>
        <taxon>Pseudomonadati</taxon>
        <taxon>Pseudomonadota</taxon>
        <taxon>Gammaproteobacteria</taxon>
        <taxon>Enterobacterales</taxon>
        <taxon>Enterobacteriaceae</taxon>
        <taxon>Escherichia</taxon>
    </lineage>
</organism>
<sequence>MNKVYSLKYCPVTGGLIVVSELASRVIKKTCRRLTHILLAGIPAVYLYYPQISQAGIVRSDIAYQIYRDFAENKGLFVPGATDIPVYDKDGKLVGRLDKAPMADFSSVSSNGVATLVSPQYIVSVKHNGGYQSVSFGNGKNTYSLVDRNNHSSVDFHAPRLNKLVTEVIPSAITSEGTKANAYKDTERYTAFYRVGSGTQYTKDKDGNLVKVAGGYAFKTGGTTGVPLISDATIVSNPGQTYNPVNGPLPDYGAPGDSGSPLFAYDEQQKKWVIVAVLRAYAGINGATNWWNVIPTDYLNQVMQDDFDAPVDFVSGLPPLNWTYDKTSGTGTLSQGSKNWTMHGQKDNDLNAGKNLVFSGQNGAIVLKDSVTQGAGYLEFKDSYTVSAESGKTWTGAGIITDKGTNVTWKVNGVAGDNLHKLGEGTLTINGTGVNPGGLKTGDGTVVLNQQADTAGNVQAFSSVNLASGRPTVVLGDARQVNPDNISWGYRGGKLDLNGNAVTFTRLQAADYGAVITNNAQQKSRLLLDLKAQDTNVSVPIGSISPFGGTGTPGNLYSMILNGQTRFYILKSASYGNTLWGNSLNDPAQWEFVGTDKNKAVQTVKDRILAGRAKQPVIFHGQLTGNMDVTIPQLPGGRKVILDGSVNLPEGTLSEDSGTLIFQGHPVIHASVSGSAPVSLNQKDWENRQFIMKTLSLKDADFHLSRNASLNSDIKSDNSHITLGSDRVFVDKNDGTGNYVILEEGTSVPDTVNDRSQYEGNITLDHNSTLDIGSRFTGGIEAYDSAVSITSPDVLLTAPGAFAGSSLTVHDGGHLTALNGLFSDGHIQAGKNSKITLSGTPVKDTANQYAPAVYLTDGYDLTGDNATLEITRGAHASGDIHASAASTVTIGSDTPAELASAETTASAFAGSLLEGYNAAFNGAITGGRADVSMHNALWTLGGDSAIHTLTVRNSRISSEGDRTFRTLTVNKLDATGSDFVLRTDLKNADKINVTEKATGSDNSLNVSFMKDPAQGQSLNIPLVTAPAGTSAEMFKAGTRMIGFSRVTPTLHVDTSGGNTKWILDGFKAEADKAAAAKADSFMNAGYKNFMTEVNNLNKRMGDLRDTNGDAGAWARIMSGAGSADGGYSDNYTHVQVGFDKKHELDGVDLFTGVTMTYTDSSADSHAFSGKTKSVGGGLYASALFESGAYIDLIGKYIHHDNDYTGNFAGLGTKHYNTHSWYAGAETGYRYHLTEETFIEPQAELVYGAVSGKTFRWKDGDMDLSMKNRDFSPLIGRTGIELGKTFSGKDWSVTARAGTSWQFDLLNNGETVLRDASGEKRIKGEKDSRMLFNVGMNAQIKDNMRFGLEFEKSAFGKYNVDNAVNANFRYMF</sequence>
<keyword id="KW-0998">Cell outer membrane</keyword>
<keyword id="KW-0378">Hydrolase</keyword>
<keyword id="KW-0472">Membrane</keyword>
<keyword id="KW-0574">Periplasm</keyword>
<keyword id="KW-0645">Protease</keyword>
<keyword id="KW-1185">Reference proteome</keyword>
<keyword id="KW-0964">Secreted</keyword>
<keyword id="KW-0720">Serine protease</keyword>
<keyword id="KW-0732">Signal</keyword>
<keyword id="KW-0812">Transmembrane</keyword>
<keyword id="KW-1134">Transmembrane beta strand</keyword>
<keyword id="KW-0843">Virulence</keyword>
<keyword id="KW-0865">Zymogen</keyword>
<proteinExistence type="inferred from homology"/>
<protein>
    <recommendedName>
        <fullName>Serine protease pic autotransporter</fullName>
        <ecNumber>3.4.21.-</ecNumber>
    </recommendedName>
    <component>
        <recommendedName>
            <fullName>Serine protease pic</fullName>
        </recommendedName>
    </component>
    <component>
        <recommendedName>
            <fullName>Serine protease pic translocator</fullName>
        </recommendedName>
    </component>
</protein>
<dbReference type="EC" id="3.4.21.-"/>
<dbReference type="EMBL" id="AE014075">
    <property type="protein sequence ID" value="AAN78833.1"/>
    <property type="molecule type" value="Genomic_DNA"/>
</dbReference>
<dbReference type="RefSeq" id="WP_001045652.1">
    <property type="nucleotide sequence ID" value="NZ_CP051263.1"/>
</dbReference>
<dbReference type="SMR" id="Q8CWC7"/>
<dbReference type="STRING" id="199310.c0350"/>
<dbReference type="MEROPS" id="S06.005"/>
<dbReference type="KEGG" id="ecc:c0350"/>
<dbReference type="eggNOG" id="COG3210">
    <property type="taxonomic scope" value="Bacteria"/>
</dbReference>
<dbReference type="eggNOG" id="COG3468">
    <property type="taxonomic scope" value="Bacteria"/>
</dbReference>
<dbReference type="HOGENOM" id="CLU_000723_0_0_6"/>
<dbReference type="BioCyc" id="ECOL199310:C0350-MONOMER"/>
<dbReference type="Proteomes" id="UP000001410">
    <property type="component" value="Chromosome"/>
</dbReference>
<dbReference type="GO" id="GO:0009279">
    <property type="term" value="C:cell outer membrane"/>
    <property type="evidence" value="ECO:0007669"/>
    <property type="project" value="UniProtKB-SubCell"/>
</dbReference>
<dbReference type="GO" id="GO:0009986">
    <property type="term" value="C:cell surface"/>
    <property type="evidence" value="ECO:0007669"/>
    <property type="project" value="UniProtKB-SubCell"/>
</dbReference>
<dbReference type="GO" id="GO:0005576">
    <property type="term" value="C:extracellular region"/>
    <property type="evidence" value="ECO:0007669"/>
    <property type="project" value="UniProtKB-SubCell"/>
</dbReference>
<dbReference type="GO" id="GO:0042597">
    <property type="term" value="C:periplasmic space"/>
    <property type="evidence" value="ECO:0007669"/>
    <property type="project" value="UniProtKB-SubCell"/>
</dbReference>
<dbReference type="GO" id="GO:0004252">
    <property type="term" value="F:serine-type endopeptidase activity"/>
    <property type="evidence" value="ECO:0007669"/>
    <property type="project" value="InterPro"/>
</dbReference>
<dbReference type="GO" id="GO:0006508">
    <property type="term" value="P:proteolysis"/>
    <property type="evidence" value="ECO:0007669"/>
    <property type="project" value="UniProtKB-KW"/>
</dbReference>
<dbReference type="CDD" id="cd01343">
    <property type="entry name" value="PL1_Passenger_AT"/>
    <property type="match status" value="1"/>
</dbReference>
<dbReference type="Gene3D" id="2.160.20.20">
    <property type="match status" value="1"/>
</dbReference>
<dbReference type="Gene3D" id="2.40.10.120">
    <property type="match status" value="1"/>
</dbReference>
<dbReference type="Gene3D" id="2.40.128.130">
    <property type="entry name" value="Autotransporter beta-domain"/>
    <property type="match status" value="1"/>
</dbReference>
<dbReference type="InterPro" id="IPR005546">
    <property type="entry name" value="Autotransporte_beta"/>
</dbReference>
<dbReference type="InterPro" id="IPR036709">
    <property type="entry name" value="Autotransporte_beta_dom_sf"/>
</dbReference>
<dbReference type="InterPro" id="IPR012332">
    <property type="entry name" value="Autotransporter_pectin_lyase_C"/>
</dbReference>
<dbReference type="InterPro" id="IPR050909">
    <property type="entry name" value="Bact_Autotransporter_VF"/>
</dbReference>
<dbReference type="InterPro" id="IPR006315">
    <property type="entry name" value="OM_autotransptr_brl_dom"/>
</dbReference>
<dbReference type="InterPro" id="IPR011050">
    <property type="entry name" value="Pectin_lyase_fold/virulence"/>
</dbReference>
<dbReference type="InterPro" id="IPR000710">
    <property type="entry name" value="Peptidase_S6"/>
</dbReference>
<dbReference type="InterPro" id="IPR030396">
    <property type="entry name" value="Peptidase_S6_dom"/>
</dbReference>
<dbReference type="NCBIfam" id="TIGR01414">
    <property type="entry name" value="autotrans_barl"/>
    <property type="match status" value="1"/>
</dbReference>
<dbReference type="PANTHER" id="PTHR12338">
    <property type="entry name" value="AUTOTRANSPORTER"/>
    <property type="match status" value="1"/>
</dbReference>
<dbReference type="PANTHER" id="PTHR12338:SF8">
    <property type="entry name" value="HEME_HEMOPEXIN-BINDING PROTEIN"/>
    <property type="match status" value="1"/>
</dbReference>
<dbReference type="Pfam" id="PF03797">
    <property type="entry name" value="Autotransporter"/>
    <property type="match status" value="1"/>
</dbReference>
<dbReference type="Pfam" id="PF24078">
    <property type="entry name" value="Beta-sol_PIC_HAP1_IgA0_2nd"/>
    <property type="match status" value="1"/>
</dbReference>
<dbReference type="Pfam" id="PF02395">
    <property type="entry name" value="Peptidase_S6"/>
    <property type="match status" value="1"/>
</dbReference>
<dbReference type="PRINTS" id="PR00921">
    <property type="entry name" value="IGASERPTASE"/>
</dbReference>
<dbReference type="SMART" id="SM00869">
    <property type="entry name" value="Autotransporter"/>
    <property type="match status" value="1"/>
</dbReference>
<dbReference type="SUPFAM" id="SSF103515">
    <property type="entry name" value="Autotransporter"/>
    <property type="match status" value="1"/>
</dbReference>
<dbReference type="SUPFAM" id="SSF51126">
    <property type="entry name" value="Pectin lyase-like"/>
    <property type="match status" value="2"/>
</dbReference>
<dbReference type="PROSITE" id="PS51208">
    <property type="entry name" value="AUTOTRANSPORTER"/>
    <property type="match status" value="1"/>
</dbReference>
<dbReference type="PROSITE" id="PS51691">
    <property type="entry name" value="PEPTIDASE_S6"/>
    <property type="match status" value="1"/>
</dbReference>
<gene>
    <name type="primary">pic</name>
    <name type="synonym">she</name>
    <name type="ordered locus">c0350</name>
</gene>
<evidence type="ECO:0000250" key="1"/>
<evidence type="ECO:0000255" key="2"/>
<evidence type="ECO:0000255" key="3">
    <source>
        <dbReference type="PROSITE-ProRule" id="PRU00556"/>
    </source>
</evidence>
<evidence type="ECO:0000255" key="4">
    <source>
        <dbReference type="PROSITE-ProRule" id="PRU01028"/>
    </source>
</evidence>
<evidence type="ECO:0000269" key="5">
    <source>
    </source>
</evidence>
<evidence type="ECO:0000305" key="6"/>
<feature type="signal peptide">
    <location>
        <begin position="1"/>
        <end position="55"/>
    </location>
</feature>
<feature type="chain" id="PRO_0000387606" description="Serine protease pic autotransporter">
    <location>
        <begin position="56"/>
        <end position="1371"/>
    </location>
</feature>
<feature type="chain" id="PRO_0000026974" description="Serine protease pic">
    <location>
        <begin position="56"/>
        <end position="1094"/>
    </location>
</feature>
<feature type="chain" id="PRO_0000026975" description="Serine protease pic translocator" evidence="2">
    <location>
        <begin position="1095"/>
        <end position="1371"/>
    </location>
</feature>
<feature type="domain" description="Peptidase S6" evidence="4">
    <location>
        <begin position="56"/>
        <end position="301"/>
    </location>
</feature>
<feature type="domain" description="Autotransporter" evidence="3">
    <location>
        <begin position="1105"/>
        <end position="1371"/>
    </location>
</feature>
<feature type="active site" description="Charge relay system" evidence="4">
    <location>
        <position position="127"/>
    </location>
</feature>
<feature type="active site" description="Charge relay system" evidence="4">
    <location>
        <position position="155"/>
    </location>
</feature>
<feature type="active site" description="Charge relay system" evidence="4">
    <location>
        <position position="258"/>
    </location>
</feature>
<feature type="site" description="Cleavage" evidence="2">
    <location>
        <begin position="1094"/>
        <end position="1095"/>
    </location>
</feature>
<reference key="1">
    <citation type="journal article" date="2002" name="Proc. Natl. Acad. Sci. U.S.A.">
        <title>Extensive mosaic structure revealed by the complete genome sequence of uropathogenic Escherichia coli.</title>
        <authorList>
            <person name="Welch R.A."/>
            <person name="Burland V."/>
            <person name="Plunkett G. III"/>
            <person name="Redford P."/>
            <person name="Roesch P."/>
            <person name="Rasko D."/>
            <person name="Buckles E.L."/>
            <person name="Liou S.-R."/>
            <person name="Boutin A."/>
            <person name="Hackett J."/>
            <person name="Stroud D."/>
            <person name="Mayhew G.F."/>
            <person name="Rose D.J."/>
            <person name="Zhou S."/>
            <person name="Schwartz D.C."/>
            <person name="Perna N.T."/>
            <person name="Mobley H.L.T."/>
            <person name="Donnenberg M.S."/>
            <person name="Blattner F.R."/>
        </authorList>
    </citation>
    <scope>NUCLEOTIDE SEQUENCE [LARGE SCALE GENOMIC DNA]</scope>
    <source>
        <strain>CFT073 / ATCC 700928 / UPEC</strain>
    </source>
</reference>
<reference key="2">
    <citation type="journal article" date="2004" name="Infect. Immun.">
        <title>Autotransporter genes pic and tsh are associated with Escherichia coli strains that cause acute pyelonephritis and are expressed during urinary tract infection.</title>
        <authorList>
            <person name="Heimer S.R."/>
            <person name="Rasko D.A."/>
            <person name="Lockatell C.V."/>
            <person name="Johnson D.E."/>
            <person name="Mobley H.L.T."/>
        </authorList>
    </citation>
    <scope>FUNCTION</scope>
    <scope>SUBCELLULAR LOCATION</scope>
    <source>
        <strain>CFT073 / ATCC 700928 / UPEC</strain>
    </source>
</reference>
<accession>Q8CWC7</accession>
<comment type="function">
    <text evidence="5">Involved in virulence of uropathogenic E.coli although it is not known how it contributes to it. Has no mucinase activity.</text>
</comment>
<comment type="subcellular location">
    <molecule>Serine protease pic autotransporter</molecule>
    <subcellularLocation>
        <location evidence="1">Periplasm</location>
    </subcellularLocation>
</comment>
<comment type="subcellular location">
    <molecule>Serine protease pic</molecule>
    <subcellularLocation>
        <location>Secreted</location>
    </subcellularLocation>
    <subcellularLocation>
        <location>Cell surface</location>
    </subcellularLocation>
</comment>
<comment type="subcellular location">
    <molecule>Serine protease pic translocator</molecule>
    <subcellularLocation>
        <location evidence="1">Cell outer membrane</location>
        <topology evidence="1">Multi-pass membrane protein</topology>
    </subcellularLocation>
    <text evidence="1">The cleaved C-terminal fragment (autotransporter domain) is localized in the outer membrane.</text>
</comment>
<comment type="domain">
    <text evidence="1">The signal peptide, cleaved at the inner membrane, guides the autotransporter protein to the periplasmic space. Then, insertion of the C-terminal translocator domain in the outer membrane forms a hydrophilic pore for the translocation of the passenger domain to the bacterial cell surface, with subsequent cleavage (By similarity).</text>
</comment>
<comment type="PTM">
    <text evidence="6">Cleaved to release the mature protein from the outer membrane.</text>
</comment>